<proteinExistence type="inferred from homology"/>
<gene>
    <name type="ORF">SPAC1399.05c</name>
</gene>
<organism>
    <name type="scientific">Schizosaccharomyces pombe (strain 972 / ATCC 24843)</name>
    <name type="common">Fission yeast</name>
    <dbReference type="NCBI Taxonomy" id="284812"/>
    <lineage>
        <taxon>Eukaryota</taxon>
        <taxon>Fungi</taxon>
        <taxon>Dikarya</taxon>
        <taxon>Ascomycota</taxon>
        <taxon>Taphrinomycotina</taxon>
        <taxon>Schizosaccharomycetes</taxon>
        <taxon>Schizosaccharomycetales</taxon>
        <taxon>Schizosaccharomycetaceae</taxon>
        <taxon>Schizosaccharomyces</taxon>
    </lineage>
</organism>
<comment type="subcellular location">
    <subcellularLocation>
        <location evidence="1 2">Nucleus</location>
    </subcellularLocation>
</comment>
<reference key="1">
    <citation type="journal article" date="2002" name="Nature">
        <title>The genome sequence of Schizosaccharomyces pombe.</title>
        <authorList>
            <person name="Wood V."/>
            <person name="Gwilliam R."/>
            <person name="Rajandream M.A."/>
            <person name="Lyne M.H."/>
            <person name="Lyne R."/>
            <person name="Stewart A."/>
            <person name="Sgouros J.G."/>
            <person name="Peat N."/>
            <person name="Hayles J."/>
            <person name="Baker S.G."/>
            <person name="Basham D."/>
            <person name="Bowman S."/>
            <person name="Brooks K."/>
            <person name="Brown D."/>
            <person name="Brown S."/>
            <person name="Chillingworth T."/>
            <person name="Churcher C.M."/>
            <person name="Collins M."/>
            <person name="Connor R."/>
            <person name="Cronin A."/>
            <person name="Davis P."/>
            <person name="Feltwell T."/>
            <person name="Fraser A."/>
            <person name="Gentles S."/>
            <person name="Goble A."/>
            <person name="Hamlin N."/>
            <person name="Harris D.E."/>
            <person name="Hidalgo J."/>
            <person name="Hodgson G."/>
            <person name="Holroyd S."/>
            <person name="Hornsby T."/>
            <person name="Howarth S."/>
            <person name="Huckle E.J."/>
            <person name="Hunt S."/>
            <person name="Jagels K."/>
            <person name="James K.D."/>
            <person name="Jones L."/>
            <person name="Jones M."/>
            <person name="Leather S."/>
            <person name="McDonald S."/>
            <person name="McLean J."/>
            <person name="Mooney P."/>
            <person name="Moule S."/>
            <person name="Mungall K.L."/>
            <person name="Murphy L.D."/>
            <person name="Niblett D."/>
            <person name="Odell C."/>
            <person name="Oliver K."/>
            <person name="O'Neil S."/>
            <person name="Pearson D."/>
            <person name="Quail M.A."/>
            <person name="Rabbinowitsch E."/>
            <person name="Rutherford K.M."/>
            <person name="Rutter S."/>
            <person name="Saunders D."/>
            <person name="Seeger K."/>
            <person name="Sharp S."/>
            <person name="Skelton J."/>
            <person name="Simmonds M.N."/>
            <person name="Squares R."/>
            <person name="Squares S."/>
            <person name="Stevens K."/>
            <person name="Taylor K."/>
            <person name="Taylor R.G."/>
            <person name="Tivey A."/>
            <person name="Walsh S.V."/>
            <person name="Warren T."/>
            <person name="Whitehead S."/>
            <person name="Woodward J.R."/>
            <person name="Volckaert G."/>
            <person name="Aert R."/>
            <person name="Robben J."/>
            <person name="Grymonprez B."/>
            <person name="Weltjens I."/>
            <person name="Vanstreels E."/>
            <person name="Rieger M."/>
            <person name="Schaefer M."/>
            <person name="Mueller-Auer S."/>
            <person name="Gabel C."/>
            <person name="Fuchs M."/>
            <person name="Duesterhoeft A."/>
            <person name="Fritzc C."/>
            <person name="Holzer E."/>
            <person name="Moestl D."/>
            <person name="Hilbert H."/>
            <person name="Borzym K."/>
            <person name="Langer I."/>
            <person name="Beck A."/>
            <person name="Lehrach H."/>
            <person name="Reinhardt R."/>
            <person name="Pohl T.M."/>
            <person name="Eger P."/>
            <person name="Zimmermann W."/>
            <person name="Wedler H."/>
            <person name="Wambutt R."/>
            <person name="Purnelle B."/>
            <person name="Goffeau A."/>
            <person name="Cadieu E."/>
            <person name="Dreano S."/>
            <person name="Gloux S."/>
            <person name="Lelaure V."/>
            <person name="Mottier S."/>
            <person name="Galibert F."/>
            <person name="Aves S.J."/>
            <person name="Xiang Z."/>
            <person name="Hunt C."/>
            <person name="Moore K."/>
            <person name="Hurst S.M."/>
            <person name="Lucas M."/>
            <person name="Rochet M."/>
            <person name="Gaillardin C."/>
            <person name="Tallada V.A."/>
            <person name="Garzon A."/>
            <person name="Thode G."/>
            <person name="Daga R.R."/>
            <person name="Cruzado L."/>
            <person name="Jimenez J."/>
            <person name="Sanchez M."/>
            <person name="del Rey F."/>
            <person name="Benito J."/>
            <person name="Dominguez A."/>
            <person name="Revuelta J.L."/>
            <person name="Moreno S."/>
            <person name="Armstrong J."/>
            <person name="Forsburg S.L."/>
            <person name="Cerutti L."/>
            <person name="Lowe T."/>
            <person name="McCombie W.R."/>
            <person name="Paulsen I."/>
            <person name="Potashkin J."/>
            <person name="Shpakovski G.V."/>
            <person name="Ussery D."/>
            <person name="Barrell B.G."/>
            <person name="Nurse P."/>
        </authorList>
    </citation>
    <scope>NUCLEOTIDE SEQUENCE [LARGE SCALE GENOMIC DNA]</scope>
    <source>
        <strain>972 / ATCC 24843</strain>
    </source>
</reference>
<reference key="2">
    <citation type="journal article" date="2006" name="Nat. Biotechnol.">
        <title>ORFeome cloning and global analysis of protein localization in the fission yeast Schizosaccharomyces pombe.</title>
        <authorList>
            <person name="Matsuyama A."/>
            <person name="Arai R."/>
            <person name="Yashiroda Y."/>
            <person name="Shirai A."/>
            <person name="Kamata A."/>
            <person name="Sekido S."/>
            <person name="Kobayashi Y."/>
            <person name="Hashimoto A."/>
            <person name="Hamamoto M."/>
            <person name="Hiraoka Y."/>
            <person name="Horinouchi S."/>
            <person name="Yoshida M."/>
        </authorList>
    </citation>
    <scope>SUBCELLULAR LOCATION [LARGE SCALE ANALYSIS]</scope>
</reference>
<sequence length="529" mass="60558">MGEVERTRQSSSSLLTFKRKRALEACDSCRKQKTRCLAGSVEDENRACLRCRSLNMDCSLADPNHFIRKVENDNMDAISANINSKLENRLKVLEKAISSITNSPIAGQISLKSEKDVFLQGLLSMDEIELLLEIFIERYGKRWLSVDYSASQYMELLYTKSHLMLATACLIALRHNPSLKARIYTDVLNIVDRLISEELLTTSPSLQFFEAVSMLTLYRPLRLSQKQDLWLLSGFALQHRTLSSTKGWFNGFAGSSATLTYLDIVPARTWNHLCHGHLVMCMGYRRHAMLDENTFDDCRNILTNTKANEFDGNILGMLSVYSMLYRMLRSPTLDLDYAIFQLEEWRKEWCHLWEQPEPQYSRIAYFYSYNVVYEASIQTATDGNDFANIPRYVSMVQSYALKTIDAIFELSAYDMSRCSDHVLFHAGFASASLLRLIYAAKTKEVDTSIVQPKVLNDLVTKIWKWLLVISVDQYHLATKFANYLKEYQKTVNEGTAESTWFKGPLRPVSSTTLQALKPYNLGVATVERG</sequence>
<accession>Q9HE16</accession>
<name>YI35_SCHPO</name>
<feature type="chain" id="PRO_0000310385" description="Uncharacterized transcriptional regulatory protein C1399.05c">
    <location>
        <begin position="1"/>
        <end position="529"/>
    </location>
</feature>
<feature type="DNA-binding region" description="Zn(2)-C6 fungal-type" evidence="1">
    <location>
        <begin position="26"/>
        <end position="58"/>
    </location>
</feature>
<protein>
    <recommendedName>
        <fullName>Uncharacterized transcriptional regulatory protein C1399.05c</fullName>
    </recommendedName>
</protein>
<keyword id="KW-0238">DNA-binding</keyword>
<keyword id="KW-0479">Metal-binding</keyword>
<keyword id="KW-0539">Nucleus</keyword>
<keyword id="KW-1185">Reference proteome</keyword>
<keyword id="KW-0804">Transcription</keyword>
<keyword id="KW-0805">Transcription regulation</keyword>
<keyword id="KW-0862">Zinc</keyword>
<dbReference type="EMBL" id="CU329670">
    <property type="protein sequence ID" value="CAC19742.1"/>
    <property type="molecule type" value="Genomic_DNA"/>
</dbReference>
<dbReference type="SMR" id="Q9HE16"/>
<dbReference type="BioGRID" id="279003">
    <property type="interactions" value="27"/>
</dbReference>
<dbReference type="FunCoup" id="Q9HE16">
    <property type="interactions" value="283"/>
</dbReference>
<dbReference type="STRING" id="284812.Q9HE16"/>
<dbReference type="SwissPalm" id="Q9HE16"/>
<dbReference type="PaxDb" id="4896-SPAC1399.05c.1"/>
<dbReference type="EnsemblFungi" id="SPAC1399.05c.1">
    <property type="protein sequence ID" value="SPAC1399.05c.1:pep"/>
    <property type="gene ID" value="SPAC1399.05c"/>
</dbReference>
<dbReference type="KEGG" id="spo:2542546"/>
<dbReference type="PomBase" id="SPAC1399.05c"/>
<dbReference type="VEuPathDB" id="FungiDB:SPAC1399.05c"/>
<dbReference type="eggNOG" id="ENOG502QUEK">
    <property type="taxonomic scope" value="Eukaryota"/>
</dbReference>
<dbReference type="HOGENOM" id="CLU_021797_0_0_1"/>
<dbReference type="InParanoid" id="Q9HE16"/>
<dbReference type="OMA" id="VPARTWN"/>
<dbReference type="PhylomeDB" id="Q9HE16"/>
<dbReference type="PRO" id="PR:Q9HE16"/>
<dbReference type="Proteomes" id="UP000002485">
    <property type="component" value="Chromosome I"/>
</dbReference>
<dbReference type="GO" id="GO:0000785">
    <property type="term" value="C:chromatin"/>
    <property type="evidence" value="ECO:0000314"/>
    <property type="project" value="PomBase"/>
</dbReference>
<dbReference type="GO" id="GO:0005634">
    <property type="term" value="C:nucleus"/>
    <property type="evidence" value="ECO:0007005"/>
    <property type="project" value="PomBase"/>
</dbReference>
<dbReference type="GO" id="GO:0001228">
    <property type="term" value="F:DNA-binding transcription activator activity, RNA polymerase II-specific"/>
    <property type="evidence" value="ECO:0000315"/>
    <property type="project" value="PomBase"/>
</dbReference>
<dbReference type="GO" id="GO:0000981">
    <property type="term" value="F:DNA-binding transcription factor activity, RNA polymerase II-specific"/>
    <property type="evidence" value="ECO:0000318"/>
    <property type="project" value="GO_Central"/>
</dbReference>
<dbReference type="GO" id="GO:0000978">
    <property type="term" value="F:RNA polymerase II cis-regulatory region sequence-specific DNA binding"/>
    <property type="evidence" value="ECO:0000255"/>
    <property type="project" value="PomBase"/>
</dbReference>
<dbReference type="GO" id="GO:0000976">
    <property type="term" value="F:transcription cis-regulatory region binding"/>
    <property type="evidence" value="ECO:0000318"/>
    <property type="project" value="GO_Central"/>
</dbReference>
<dbReference type="GO" id="GO:0008270">
    <property type="term" value="F:zinc ion binding"/>
    <property type="evidence" value="ECO:0000255"/>
    <property type="project" value="PomBase"/>
</dbReference>
<dbReference type="GO" id="GO:1903931">
    <property type="term" value="P:positive regulation of pyrimidine-containing compound salvage"/>
    <property type="evidence" value="ECO:0000315"/>
    <property type="project" value="PomBase"/>
</dbReference>
<dbReference type="GO" id="GO:0006355">
    <property type="term" value="P:regulation of DNA-templated transcription"/>
    <property type="evidence" value="ECO:0000318"/>
    <property type="project" value="GO_Central"/>
</dbReference>
<dbReference type="GO" id="GO:0006357">
    <property type="term" value="P:regulation of transcription by RNA polymerase II"/>
    <property type="evidence" value="ECO:0000255"/>
    <property type="project" value="PomBase"/>
</dbReference>
<dbReference type="CDD" id="cd00067">
    <property type="entry name" value="GAL4"/>
    <property type="match status" value="1"/>
</dbReference>
<dbReference type="Gene3D" id="4.10.240.10">
    <property type="entry name" value="Zn(2)-C6 fungal-type DNA-binding domain"/>
    <property type="match status" value="1"/>
</dbReference>
<dbReference type="InterPro" id="IPR051089">
    <property type="entry name" value="prtT"/>
</dbReference>
<dbReference type="InterPro" id="IPR036864">
    <property type="entry name" value="Zn2-C6_fun-type_DNA-bd_sf"/>
</dbReference>
<dbReference type="InterPro" id="IPR001138">
    <property type="entry name" value="Zn2Cys6_DnaBD"/>
</dbReference>
<dbReference type="PANTHER" id="PTHR31845">
    <property type="entry name" value="FINGER DOMAIN PROTEIN, PUTATIVE-RELATED"/>
    <property type="match status" value="1"/>
</dbReference>
<dbReference type="PANTHER" id="PTHR31845:SF34">
    <property type="entry name" value="TRANSCRIPTIONAL ACTIVATOR OF PROTEASES PRTT"/>
    <property type="match status" value="1"/>
</dbReference>
<dbReference type="Pfam" id="PF00172">
    <property type="entry name" value="Zn_clus"/>
    <property type="match status" value="1"/>
</dbReference>
<dbReference type="SMART" id="SM00066">
    <property type="entry name" value="GAL4"/>
    <property type="match status" value="1"/>
</dbReference>
<dbReference type="SUPFAM" id="SSF57701">
    <property type="entry name" value="Zn2/Cys6 DNA-binding domain"/>
    <property type="match status" value="1"/>
</dbReference>
<dbReference type="PROSITE" id="PS00463">
    <property type="entry name" value="ZN2_CY6_FUNGAL_1"/>
    <property type="match status" value="1"/>
</dbReference>
<dbReference type="PROSITE" id="PS50048">
    <property type="entry name" value="ZN2_CY6_FUNGAL_2"/>
    <property type="match status" value="1"/>
</dbReference>
<evidence type="ECO:0000255" key="1">
    <source>
        <dbReference type="PROSITE-ProRule" id="PRU00227"/>
    </source>
</evidence>
<evidence type="ECO:0000269" key="2">
    <source>
    </source>
</evidence>